<comment type="function">
    <text>Orphan receptor.</text>
</comment>
<comment type="subcellular location">
    <subcellularLocation>
        <location>Cell membrane</location>
        <topology>Multi-pass membrane protein</topology>
    </subcellularLocation>
</comment>
<comment type="similarity">
    <text evidence="2">Belongs to the G-protein coupled receptor 1 family.</text>
</comment>
<sequence length="631" mass="68459">MSDERRLPSSAVGWLACGGLSLLANAWGILSVGAKQKKWKPLEFLLCTLAATHMLNVAVPIATYAVVQLRRQRPDYEWNEGLCKVFVSTFYTLTLATCFSVTSISYHRMWMVRWPVNYRLSNAKKQAVHTVMGIWMVSFILSALPAVGWHDTSERFYTHGCRFIVAEIGLGFGVCFLLLVGGSVAMGMVCTAIALFQTLATQVGHRADRRTFTVPTIVVEDAQGKRRSSIDGSEPARTSLQITGLVATIVVIYDCLMGFPVLVVSFSSLRADASAPWMALCVLWCSVTQALLLPLFLWTCDRYRADLKAVWEKCVALMANDEDSDNETSLEGSISPDMVLERSLDYSYGGDFVALDRMAKYELSALEGGLPQLYPLRPLQEDRMQYLQGAGRHRCGFPGGQPCFSPAGCSQVPPTRRFSHDDADVWAAVPLPTFLPRWSSGEDLAALAHLMLPAGSDRRRGSLLAFAEDAPPFRPRRRSAESLLSLQPSSLDGGPRHAQDSPPGSPRRRPGPGARSASVSLLPDAFALTAFEREPQALRRVPAPAQPFPAARDSAEPAEVPTPPGGRTQRSQGRRAARTHVGPLQSSLSASWGEPGGLHAAGCGSISSFLSSPSESSGYVTLHSDSLGSAS</sequence>
<organism>
    <name type="scientific">Mus musculus</name>
    <name type="common">Mouse</name>
    <dbReference type="NCBI Taxonomy" id="10090"/>
    <lineage>
        <taxon>Eukaryota</taxon>
        <taxon>Metazoa</taxon>
        <taxon>Chordata</taxon>
        <taxon>Craniata</taxon>
        <taxon>Vertebrata</taxon>
        <taxon>Euteleostomi</taxon>
        <taxon>Mammalia</taxon>
        <taxon>Eutheria</taxon>
        <taxon>Euarchontoglires</taxon>
        <taxon>Glires</taxon>
        <taxon>Rodentia</taxon>
        <taxon>Myomorpha</taxon>
        <taxon>Muroidea</taxon>
        <taxon>Muridae</taxon>
        <taxon>Murinae</taxon>
        <taxon>Mus</taxon>
        <taxon>Mus</taxon>
    </lineage>
</organism>
<reference key="1">
    <citation type="journal article" date="2004" name="Genome Res.">
        <title>The status, quality, and expansion of the NIH full-length cDNA project: the Mammalian Gene Collection (MGC).</title>
        <authorList>
            <consortium name="The MGC Project Team"/>
        </authorList>
    </citation>
    <scope>NUCLEOTIDE SEQUENCE [LARGE SCALE MRNA]</scope>
    <source>
        <strain>FVB/N</strain>
        <tissue>Mammary tumor</tissue>
    </source>
</reference>
<reference key="2">
    <citation type="journal article" date="2003" name="Proc. Natl. Acad. Sci. U.S.A.">
        <title>The G protein-coupled receptor repertoires of human and mouse.</title>
        <authorList>
            <person name="Vassilatis D.K."/>
            <person name="Hohmann J.G."/>
            <person name="Zeng H."/>
            <person name="Li F."/>
            <person name="Ranchalis J.E."/>
            <person name="Mortrud M.T."/>
            <person name="Brown A."/>
            <person name="Rodriguez S.S."/>
            <person name="Weller J.R."/>
            <person name="Wright A.C."/>
            <person name="Bergmann J.E."/>
            <person name="Gaitanaris G.A."/>
        </authorList>
    </citation>
    <scope>NUCLEOTIDE SEQUENCE [LARGE SCALE MRNA] OF 8-84</scope>
</reference>
<dbReference type="EMBL" id="BC029098">
    <property type="protein sequence ID" value="AAH29098.2"/>
    <property type="molecule type" value="mRNA"/>
</dbReference>
<dbReference type="EMBL" id="BC037650">
    <property type="protein sequence ID" value="AAH37650.1"/>
    <property type="molecule type" value="mRNA"/>
</dbReference>
<dbReference type="EMBL" id="AY255610">
    <property type="protein sequence ID" value="AAO85122.1"/>
    <property type="molecule type" value="mRNA"/>
</dbReference>
<dbReference type="CCDS" id="CCDS18996.1"/>
<dbReference type="RefSeq" id="NP_848493.1">
    <property type="nucleotide sequence ID" value="NM_178406.2"/>
</dbReference>
<dbReference type="BioGRID" id="221387">
    <property type="interactions" value="3"/>
</dbReference>
<dbReference type="FunCoup" id="Q8K0Z9">
    <property type="interactions" value="48"/>
</dbReference>
<dbReference type="STRING" id="10090.ENSMUSP00000101276"/>
<dbReference type="GlyGen" id="Q8K0Z9">
    <property type="glycosylation" value="1 site"/>
</dbReference>
<dbReference type="iPTMnet" id="Q8K0Z9"/>
<dbReference type="PhosphoSitePlus" id="Q8K0Z9"/>
<dbReference type="PaxDb" id="10090-ENSMUSP00000101276"/>
<dbReference type="ProteomicsDB" id="267653"/>
<dbReference type="Antibodypedia" id="1936">
    <property type="antibodies" value="233 antibodies from 30 providers"/>
</dbReference>
<dbReference type="DNASU" id="100129"/>
<dbReference type="Ensembl" id="ENSMUST00000055754.8">
    <property type="protein sequence ID" value="ENSMUSP00000052742.8"/>
    <property type="gene ID" value="ENSMUSG00000042804.14"/>
</dbReference>
<dbReference type="Ensembl" id="ENSMUST00000105651.8">
    <property type="protein sequence ID" value="ENSMUSP00000101276.2"/>
    <property type="gene ID" value="ENSMUSG00000042804.14"/>
</dbReference>
<dbReference type="GeneID" id="100129"/>
<dbReference type="KEGG" id="mmu:100129"/>
<dbReference type="UCSC" id="uc008wab.1">
    <property type="organism name" value="mouse"/>
</dbReference>
<dbReference type="AGR" id="MGI:1916157"/>
<dbReference type="CTD" id="387509"/>
<dbReference type="MGI" id="MGI:1916157">
    <property type="gene designation" value="Gpr153"/>
</dbReference>
<dbReference type="VEuPathDB" id="HostDB:ENSMUSG00000042804"/>
<dbReference type="eggNOG" id="ENOG502QQA6">
    <property type="taxonomic scope" value="Eukaryota"/>
</dbReference>
<dbReference type="GeneTree" id="ENSGT00390000017213"/>
<dbReference type="InParanoid" id="Q8K0Z9"/>
<dbReference type="OMA" id="HTDLMYE"/>
<dbReference type="OrthoDB" id="9887972at2759"/>
<dbReference type="PhylomeDB" id="Q8K0Z9"/>
<dbReference type="TreeFam" id="TF330832"/>
<dbReference type="BioGRID-ORCS" id="100129">
    <property type="hits" value="4 hits in 77 CRISPR screens"/>
</dbReference>
<dbReference type="ChiTaRS" id="Gpr153">
    <property type="organism name" value="mouse"/>
</dbReference>
<dbReference type="PRO" id="PR:Q8K0Z9"/>
<dbReference type="Proteomes" id="UP000000589">
    <property type="component" value="Chromosome 4"/>
</dbReference>
<dbReference type="RNAct" id="Q8K0Z9">
    <property type="molecule type" value="protein"/>
</dbReference>
<dbReference type="Bgee" id="ENSMUSG00000042804">
    <property type="expression patterns" value="Expressed in mesenchyme of submandibular gland primordium and 136 other cell types or tissues"/>
</dbReference>
<dbReference type="ExpressionAtlas" id="Q8K0Z9">
    <property type="expression patterns" value="baseline and differential"/>
</dbReference>
<dbReference type="GO" id="GO:0005886">
    <property type="term" value="C:plasma membrane"/>
    <property type="evidence" value="ECO:0007669"/>
    <property type="project" value="UniProtKB-SubCell"/>
</dbReference>
<dbReference type="GO" id="GO:0004930">
    <property type="term" value="F:G protein-coupled receptor activity"/>
    <property type="evidence" value="ECO:0007669"/>
    <property type="project" value="UniProtKB-KW"/>
</dbReference>
<dbReference type="Gene3D" id="1.20.1070.10">
    <property type="entry name" value="Rhodopsin 7-helix transmembrane proteins"/>
    <property type="match status" value="1"/>
</dbReference>
<dbReference type="InterPro" id="IPR022347">
    <property type="entry name" value="GCR_153/162"/>
</dbReference>
<dbReference type="InterPro" id="IPR000276">
    <property type="entry name" value="GPCR_Rhodpsn"/>
</dbReference>
<dbReference type="InterPro" id="IPR017452">
    <property type="entry name" value="GPCR_Rhodpsn_7TM"/>
</dbReference>
<dbReference type="InterPro" id="IPR022335">
    <property type="entry name" value="GPR153"/>
</dbReference>
<dbReference type="PANTHER" id="PTHR16518">
    <property type="entry name" value="G-PROTEIN COUPLED RECEPTOR 153, 162"/>
    <property type="match status" value="1"/>
</dbReference>
<dbReference type="PANTHER" id="PTHR16518:SF5">
    <property type="entry name" value="G-PROTEIN COUPLED RECEPTOR 153-RELATED"/>
    <property type="match status" value="1"/>
</dbReference>
<dbReference type="Pfam" id="PF00001">
    <property type="entry name" value="7tm_1"/>
    <property type="match status" value="1"/>
</dbReference>
<dbReference type="PRINTS" id="PR01992">
    <property type="entry name" value="GPR153"/>
</dbReference>
<dbReference type="PRINTS" id="PR01991">
    <property type="entry name" value="GPR153GPR162"/>
</dbReference>
<dbReference type="SUPFAM" id="SSF81321">
    <property type="entry name" value="Family A G protein-coupled receptor-like"/>
    <property type="match status" value="1"/>
</dbReference>
<dbReference type="PROSITE" id="PS50262">
    <property type="entry name" value="G_PROTEIN_RECEP_F1_2"/>
    <property type="match status" value="1"/>
</dbReference>
<accession>Q8K0Z9</accession>
<accession>Q80T37</accession>
<accession>Q8CFK0</accession>
<keyword id="KW-1003">Cell membrane</keyword>
<keyword id="KW-0297">G-protein coupled receptor</keyword>
<keyword id="KW-0472">Membrane</keyword>
<keyword id="KW-0675">Receptor</keyword>
<keyword id="KW-1185">Reference proteome</keyword>
<keyword id="KW-0807">Transducer</keyword>
<keyword id="KW-0812">Transmembrane</keyword>
<keyword id="KW-1133">Transmembrane helix</keyword>
<proteinExistence type="evidence at transcript level"/>
<evidence type="ECO:0000255" key="1"/>
<evidence type="ECO:0000255" key="2">
    <source>
        <dbReference type="PROSITE-ProRule" id="PRU00521"/>
    </source>
</evidence>
<evidence type="ECO:0000256" key="3">
    <source>
        <dbReference type="SAM" id="MobiDB-lite"/>
    </source>
</evidence>
<gene>
    <name type="primary">Gpr153</name>
    <name type="synonym">Pgr1</name>
</gene>
<feature type="chain" id="PRO_0000069638" description="Probable G-protein coupled receptor 153">
    <location>
        <begin position="1"/>
        <end position="631"/>
    </location>
</feature>
<feature type="topological domain" description="Extracellular" evidence="1">
    <location>
        <begin position="1"/>
        <end position="11"/>
    </location>
</feature>
<feature type="transmembrane region" description="Helical; Name=1" evidence="1">
    <location>
        <begin position="12"/>
        <end position="32"/>
    </location>
</feature>
<feature type="topological domain" description="Cytoplasmic" evidence="1">
    <location>
        <begin position="33"/>
        <end position="41"/>
    </location>
</feature>
<feature type="transmembrane region" description="Helical; Name=2" evidence="1">
    <location>
        <begin position="42"/>
        <end position="62"/>
    </location>
</feature>
<feature type="topological domain" description="Extracellular" evidence="1">
    <location>
        <begin position="63"/>
        <end position="84"/>
    </location>
</feature>
<feature type="transmembrane region" description="Helical; Name=3" evidence="1">
    <location>
        <begin position="85"/>
        <end position="105"/>
    </location>
</feature>
<feature type="topological domain" description="Cytoplasmic" evidence="1">
    <location>
        <begin position="106"/>
        <end position="126"/>
    </location>
</feature>
<feature type="transmembrane region" description="Helical; Name=4" evidence="1">
    <location>
        <begin position="127"/>
        <end position="147"/>
    </location>
</feature>
<feature type="topological domain" description="Extracellular" evidence="1">
    <location>
        <begin position="148"/>
        <end position="162"/>
    </location>
</feature>
<feature type="transmembrane region" description="Helical; Name=5" evidence="1">
    <location>
        <begin position="163"/>
        <end position="183"/>
    </location>
</feature>
<feature type="topological domain" description="Cytoplasmic" evidence="1">
    <location>
        <begin position="184"/>
        <end position="243"/>
    </location>
</feature>
<feature type="transmembrane region" description="Helical; Name=6" evidence="1">
    <location>
        <begin position="244"/>
        <end position="264"/>
    </location>
</feature>
<feature type="topological domain" description="Extracellular" evidence="1">
    <location>
        <begin position="265"/>
        <end position="276"/>
    </location>
</feature>
<feature type="transmembrane region" description="Helical; Name=7" evidence="1">
    <location>
        <begin position="277"/>
        <end position="297"/>
    </location>
</feature>
<feature type="topological domain" description="Cytoplasmic" evidence="1">
    <location>
        <begin position="298"/>
        <end position="631"/>
    </location>
</feature>
<feature type="region of interest" description="Disordered" evidence="3">
    <location>
        <begin position="486"/>
        <end position="518"/>
    </location>
</feature>
<feature type="region of interest" description="Disordered" evidence="3">
    <location>
        <begin position="546"/>
        <end position="590"/>
    </location>
</feature>
<feature type="region of interest" description="Disordered" evidence="3">
    <location>
        <begin position="603"/>
        <end position="631"/>
    </location>
</feature>
<feature type="compositionally biased region" description="Low complexity" evidence="3">
    <location>
        <begin position="605"/>
        <end position="617"/>
    </location>
</feature>
<protein>
    <recommendedName>
        <fullName>Probable G-protein coupled receptor 153</fullName>
    </recommendedName>
    <alternativeName>
        <fullName>G-protein coupled receptor PGR1</fullName>
    </alternativeName>
</protein>
<name>GP153_MOUSE</name>